<proteinExistence type="inferred from homology"/>
<sequence>MRHYEIVLLVHPDQSEQVPAMLERYKTLVTAANGKVHRVEDWGRFQLAYMINKLAKAHYLCLNIECSKETLAEIETGFRFNDAVLRHLTVKRDKAETGPSAVMKRVEKEEARKSSQQETAA</sequence>
<organism>
    <name type="scientific">Leptothrix cholodnii (strain ATCC 51168 / LMG 8142 / SP-6)</name>
    <name type="common">Leptothrix discophora (strain SP-6)</name>
    <dbReference type="NCBI Taxonomy" id="395495"/>
    <lineage>
        <taxon>Bacteria</taxon>
        <taxon>Pseudomonadati</taxon>
        <taxon>Pseudomonadota</taxon>
        <taxon>Betaproteobacteria</taxon>
        <taxon>Burkholderiales</taxon>
        <taxon>Sphaerotilaceae</taxon>
        <taxon>Leptothrix</taxon>
    </lineage>
</organism>
<protein>
    <recommendedName>
        <fullName evidence="1">Small ribosomal subunit protein bS6</fullName>
    </recommendedName>
    <alternativeName>
        <fullName evidence="3">30S ribosomal protein S6</fullName>
    </alternativeName>
</protein>
<keyword id="KW-1185">Reference proteome</keyword>
<keyword id="KW-0687">Ribonucleoprotein</keyword>
<keyword id="KW-0689">Ribosomal protein</keyword>
<keyword id="KW-0694">RNA-binding</keyword>
<keyword id="KW-0699">rRNA-binding</keyword>
<name>RS6_LEPCP</name>
<reference key="1">
    <citation type="submission" date="2008-03" db="EMBL/GenBank/DDBJ databases">
        <title>Complete sequence of Leptothrix cholodnii SP-6.</title>
        <authorList>
            <consortium name="US DOE Joint Genome Institute"/>
            <person name="Copeland A."/>
            <person name="Lucas S."/>
            <person name="Lapidus A."/>
            <person name="Glavina del Rio T."/>
            <person name="Dalin E."/>
            <person name="Tice H."/>
            <person name="Bruce D."/>
            <person name="Goodwin L."/>
            <person name="Pitluck S."/>
            <person name="Chertkov O."/>
            <person name="Brettin T."/>
            <person name="Detter J.C."/>
            <person name="Han C."/>
            <person name="Kuske C.R."/>
            <person name="Schmutz J."/>
            <person name="Larimer F."/>
            <person name="Land M."/>
            <person name="Hauser L."/>
            <person name="Kyrpides N."/>
            <person name="Lykidis A."/>
            <person name="Emerson D."/>
            <person name="Richardson P."/>
        </authorList>
    </citation>
    <scope>NUCLEOTIDE SEQUENCE [LARGE SCALE GENOMIC DNA]</scope>
    <source>
        <strain>ATCC 51168 / LMG 8142 / SP-6</strain>
    </source>
</reference>
<dbReference type="EMBL" id="CP001013">
    <property type="protein sequence ID" value="ACB35095.1"/>
    <property type="molecule type" value="Genomic_DNA"/>
</dbReference>
<dbReference type="RefSeq" id="WP_012347849.1">
    <property type="nucleotide sequence ID" value="NC_010524.1"/>
</dbReference>
<dbReference type="SMR" id="B1XXH5"/>
<dbReference type="STRING" id="395495.Lcho_2830"/>
<dbReference type="KEGG" id="lch:Lcho_2830"/>
<dbReference type="eggNOG" id="COG0360">
    <property type="taxonomic scope" value="Bacteria"/>
</dbReference>
<dbReference type="HOGENOM" id="CLU_113441_6_1_4"/>
<dbReference type="OrthoDB" id="9812702at2"/>
<dbReference type="Proteomes" id="UP000001693">
    <property type="component" value="Chromosome"/>
</dbReference>
<dbReference type="GO" id="GO:0022627">
    <property type="term" value="C:cytosolic small ribosomal subunit"/>
    <property type="evidence" value="ECO:0007669"/>
    <property type="project" value="TreeGrafter"/>
</dbReference>
<dbReference type="GO" id="GO:0070181">
    <property type="term" value="F:small ribosomal subunit rRNA binding"/>
    <property type="evidence" value="ECO:0007669"/>
    <property type="project" value="TreeGrafter"/>
</dbReference>
<dbReference type="GO" id="GO:0003735">
    <property type="term" value="F:structural constituent of ribosome"/>
    <property type="evidence" value="ECO:0007669"/>
    <property type="project" value="InterPro"/>
</dbReference>
<dbReference type="GO" id="GO:0006412">
    <property type="term" value="P:translation"/>
    <property type="evidence" value="ECO:0007669"/>
    <property type="project" value="UniProtKB-UniRule"/>
</dbReference>
<dbReference type="CDD" id="cd00473">
    <property type="entry name" value="bS6"/>
    <property type="match status" value="1"/>
</dbReference>
<dbReference type="Gene3D" id="3.30.70.60">
    <property type="match status" value="1"/>
</dbReference>
<dbReference type="HAMAP" id="MF_00360">
    <property type="entry name" value="Ribosomal_bS6"/>
    <property type="match status" value="1"/>
</dbReference>
<dbReference type="InterPro" id="IPR000529">
    <property type="entry name" value="Ribosomal_bS6"/>
</dbReference>
<dbReference type="InterPro" id="IPR035980">
    <property type="entry name" value="Ribosomal_bS6_sf"/>
</dbReference>
<dbReference type="InterPro" id="IPR020814">
    <property type="entry name" value="Ribosomal_S6_plastid/chlpt"/>
</dbReference>
<dbReference type="InterPro" id="IPR014717">
    <property type="entry name" value="Transl_elong_EF1B/ribsomal_bS6"/>
</dbReference>
<dbReference type="NCBIfam" id="TIGR00166">
    <property type="entry name" value="S6"/>
    <property type="match status" value="1"/>
</dbReference>
<dbReference type="PANTHER" id="PTHR21011">
    <property type="entry name" value="MITOCHONDRIAL 28S RIBOSOMAL PROTEIN S6"/>
    <property type="match status" value="1"/>
</dbReference>
<dbReference type="PANTHER" id="PTHR21011:SF1">
    <property type="entry name" value="SMALL RIBOSOMAL SUBUNIT PROTEIN BS6M"/>
    <property type="match status" value="1"/>
</dbReference>
<dbReference type="Pfam" id="PF01250">
    <property type="entry name" value="Ribosomal_S6"/>
    <property type="match status" value="1"/>
</dbReference>
<dbReference type="SUPFAM" id="SSF54995">
    <property type="entry name" value="Ribosomal protein S6"/>
    <property type="match status" value="1"/>
</dbReference>
<gene>
    <name evidence="1" type="primary">rpsF</name>
    <name type="ordered locus">Lcho_2830</name>
</gene>
<accession>B1XXH5</accession>
<evidence type="ECO:0000255" key="1">
    <source>
        <dbReference type="HAMAP-Rule" id="MF_00360"/>
    </source>
</evidence>
<evidence type="ECO:0000256" key="2">
    <source>
        <dbReference type="SAM" id="MobiDB-lite"/>
    </source>
</evidence>
<evidence type="ECO:0000305" key="3"/>
<feature type="chain" id="PRO_1000120770" description="Small ribosomal subunit protein bS6">
    <location>
        <begin position="1"/>
        <end position="121"/>
    </location>
</feature>
<feature type="region of interest" description="Disordered" evidence="2">
    <location>
        <begin position="94"/>
        <end position="121"/>
    </location>
</feature>
<feature type="compositionally biased region" description="Basic and acidic residues" evidence="2">
    <location>
        <begin position="104"/>
        <end position="115"/>
    </location>
</feature>
<comment type="function">
    <text evidence="1">Binds together with bS18 to 16S ribosomal RNA.</text>
</comment>
<comment type="similarity">
    <text evidence="1">Belongs to the bacterial ribosomal protein bS6 family.</text>
</comment>